<gene>
    <name type="primary">MT-CYB</name>
    <name type="synonym">COB</name>
    <name type="synonym">CYTB</name>
    <name type="synonym">MTCYB</name>
</gene>
<proteinExistence type="inferred from homology"/>
<evidence type="ECO:0000250" key="1"/>
<evidence type="ECO:0000250" key="2">
    <source>
        <dbReference type="UniProtKB" id="P00157"/>
    </source>
</evidence>
<evidence type="ECO:0000255" key="3">
    <source>
        <dbReference type="PROSITE-ProRule" id="PRU00967"/>
    </source>
</evidence>
<evidence type="ECO:0000255" key="4">
    <source>
        <dbReference type="PROSITE-ProRule" id="PRU00968"/>
    </source>
</evidence>
<evidence type="ECO:0000305" key="5"/>
<reference key="1">
    <citation type="journal article" date="1999" name="Proc. R. Soc. B">
        <title>Evolutionary affinities of the enigmatic saola (Pseudoryx nghetinhensis) in the context of the molecular phylogeny of Bovidae.</title>
        <authorList>
            <person name="Hassanin A."/>
            <person name="Douzery E.J.P."/>
        </authorList>
    </citation>
    <scope>NUCLEOTIDE SEQUENCE [GENOMIC DNA]</scope>
</reference>
<reference key="2">
    <citation type="journal article" date="2001" name="Mol. Phylogenet. Evol.">
        <title>Retrieval of four adaptive lineages in duiker antelope: evidence from mitochondrial DNA sequences and fluorescence in situ hybridization.</title>
        <authorList>
            <person name="van Vuuren B.J."/>
            <person name="Robinson T.J."/>
        </authorList>
    </citation>
    <scope>NUCLEOTIDE SEQUENCE [GENOMIC DNA]</scope>
</reference>
<geneLocation type="mitochondrion"/>
<name>CYB_CEPDO</name>
<protein>
    <recommendedName>
        <fullName>Cytochrome b</fullName>
    </recommendedName>
    <alternativeName>
        <fullName>Complex III subunit 3</fullName>
    </alternativeName>
    <alternativeName>
        <fullName>Complex III subunit III</fullName>
    </alternativeName>
    <alternativeName>
        <fullName>Cytochrome b-c1 complex subunit 3</fullName>
    </alternativeName>
    <alternativeName>
        <fullName>Ubiquinol-cytochrome-c reductase complex cytochrome b subunit</fullName>
    </alternativeName>
</protein>
<keyword id="KW-0249">Electron transport</keyword>
<keyword id="KW-0349">Heme</keyword>
<keyword id="KW-0408">Iron</keyword>
<keyword id="KW-0472">Membrane</keyword>
<keyword id="KW-0479">Metal-binding</keyword>
<keyword id="KW-0496">Mitochondrion</keyword>
<keyword id="KW-0999">Mitochondrion inner membrane</keyword>
<keyword id="KW-0679">Respiratory chain</keyword>
<keyword id="KW-0812">Transmembrane</keyword>
<keyword id="KW-1133">Transmembrane helix</keyword>
<keyword id="KW-0813">Transport</keyword>
<keyword id="KW-0830">Ubiquinone</keyword>
<feature type="chain" id="PRO_0000254669" description="Cytochrome b">
    <location>
        <begin position="1"/>
        <end position="379"/>
    </location>
</feature>
<feature type="transmembrane region" description="Helical" evidence="2">
    <location>
        <begin position="33"/>
        <end position="53"/>
    </location>
</feature>
<feature type="transmembrane region" description="Helical" evidence="2">
    <location>
        <begin position="77"/>
        <end position="98"/>
    </location>
</feature>
<feature type="transmembrane region" description="Helical" evidence="2">
    <location>
        <begin position="113"/>
        <end position="133"/>
    </location>
</feature>
<feature type="transmembrane region" description="Helical" evidence="2">
    <location>
        <begin position="178"/>
        <end position="198"/>
    </location>
</feature>
<feature type="transmembrane region" description="Helical" evidence="2">
    <location>
        <begin position="226"/>
        <end position="246"/>
    </location>
</feature>
<feature type="transmembrane region" description="Helical" evidence="2">
    <location>
        <begin position="288"/>
        <end position="308"/>
    </location>
</feature>
<feature type="transmembrane region" description="Helical" evidence="2">
    <location>
        <begin position="320"/>
        <end position="340"/>
    </location>
</feature>
<feature type="transmembrane region" description="Helical" evidence="2">
    <location>
        <begin position="347"/>
        <end position="367"/>
    </location>
</feature>
<feature type="binding site" description="axial binding residue" evidence="2">
    <location>
        <position position="83"/>
    </location>
    <ligand>
        <name>heme b</name>
        <dbReference type="ChEBI" id="CHEBI:60344"/>
        <label>b562</label>
    </ligand>
    <ligandPart>
        <name>Fe</name>
        <dbReference type="ChEBI" id="CHEBI:18248"/>
    </ligandPart>
</feature>
<feature type="binding site" description="axial binding residue" evidence="2">
    <location>
        <position position="97"/>
    </location>
    <ligand>
        <name>heme b</name>
        <dbReference type="ChEBI" id="CHEBI:60344"/>
        <label>b566</label>
    </ligand>
    <ligandPart>
        <name>Fe</name>
        <dbReference type="ChEBI" id="CHEBI:18248"/>
    </ligandPart>
</feature>
<feature type="binding site" description="axial binding residue" evidence="2">
    <location>
        <position position="182"/>
    </location>
    <ligand>
        <name>heme b</name>
        <dbReference type="ChEBI" id="CHEBI:60344"/>
        <label>b562</label>
    </ligand>
    <ligandPart>
        <name>Fe</name>
        <dbReference type="ChEBI" id="CHEBI:18248"/>
    </ligandPart>
</feature>
<feature type="binding site" description="axial binding residue" evidence="2">
    <location>
        <position position="196"/>
    </location>
    <ligand>
        <name>heme b</name>
        <dbReference type="ChEBI" id="CHEBI:60344"/>
        <label>b566</label>
    </ligand>
    <ligandPart>
        <name>Fe</name>
        <dbReference type="ChEBI" id="CHEBI:18248"/>
    </ligandPart>
</feature>
<feature type="binding site" evidence="2">
    <location>
        <position position="201"/>
    </location>
    <ligand>
        <name>a ubiquinone</name>
        <dbReference type="ChEBI" id="CHEBI:16389"/>
    </ligand>
</feature>
<feature type="sequence conflict" description="In Ref. 1; AAD42707." evidence="5" ref="1">
    <original>Q</original>
    <variation>R</variation>
    <location>
        <position position="5"/>
    </location>
</feature>
<feature type="sequence conflict" description="In Ref. 1; AAD42707." evidence="5" ref="1">
    <original>P</original>
    <variation>L</variation>
    <location>
        <position position="120"/>
    </location>
</feature>
<feature type="sequence conflict" description="In Ref. 1; AAD42707." evidence="5" ref="1">
    <original>I</original>
    <variation>V</variation>
    <location>
        <position position="348"/>
    </location>
</feature>
<organism>
    <name type="scientific">Cephalophus dorsalis</name>
    <name type="common">Bay duiker</name>
    <dbReference type="NCBI Taxonomy" id="97360"/>
    <lineage>
        <taxon>Eukaryota</taxon>
        <taxon>Metazoa</taxon>
        <taxon>Chordata</taxon>
        <taxon>Craniata</taxon>
        <taxon>Vertebrata</taxon>
        <taxon>Euteleostomi</taxon>
        <taxon>Mammalia</taxon>
        <taxon>Eutheria</taxon>
        <taxon>Laurasiatheria</taxon>
        <taxon>Artiodactyla</taxon>
        <taxon>Ruminantia</taxon>
        <taxon>Pecora</taxon>
        <taxon>Bovidae</taxon>
        <taxon>Cephalophinae</taxon>
        <taxon>Cephalophus</taxon>
    </lineage>
</organism>
<dbReference type="EMBL" id="AF091634">
    <property type="protein sequence ID" value="AAD42707.1"/>
    <property type="molecule type" value="Genomic_DNA"/>
</dbReference>
<dbReference type="EMBL" id="AF153884">
    <property type="protein sequence ID" value="AAK26672.1"/>
    <property type="molecule type" value="Genomic_DNA"/>
</dbReference>
<dbReference type="SMR" id="Q9B5S0"/>
<dbReference type="GO" id="GO:0005743">
    <property type="term" value="C:mitochondrial inner membrane"/>
    <property type="evidence" value="ECO:0007669"/>
    <property type="project" value="UniProtKB-SubCell"/>
</dbReference>
<dbReference type="GO" id="GO:0045275">
    <property type="term" value="C:respiratory chain complex III"/>
    <property type="evidence" value="ECO:0007669"/>
    <property type="project" value="InterPro"/>
</dbReference>
<dbReference type="GO" id="GO:0046872">
    <property type="term" value="F:metal ion binding"/>
    <property type="evidence" value="ECO:0007669"/>
    <property type="project" value="UniProtKB-KW"/>
</dbReference>
<dbReference type="GO" id="GO:0008121">
    <property type="term" value="F:ubiquinol-cytochrome-c reductase activity"/>
    <property type="evidence" value="ECO:0007669"/>
    <property type="project" value="InterPro"/>
</dbReference>
<dbReference type="GO" id="GO:0006122">
    <property type="term" value="P:mitochondrial electron transport, ubiquinol to cytochrome c"/>
    <property type="evidence" value="ECO:0007669"/>
    <property type="project" value="TreeGrafter"/>
</dbReference>
<dbReference type="CDD" id="cd00290">
    <property type="entry name" value="cytochrome_b_C"/>
    <property type="match status" value="1"/>
</dbReference>
<dbReference type="CDD" id="cd00284">
    <property type="entry name" value="Cytochrome_b_N"/>
    <property type="match status" value="1"/>
</dbReference>
<dbReference type="FunFam" id="1.20.810.10:FF:000002">
    <property type="entry name" value="Cytochrome b"/>
    <property type="match status" value="1"/>
</dbReference>
<dbReference type="Gene3D" id="1.20.810.10">
    <property type="entry name" value="Cytochrome Bc1 Complex, Chain C"/>
    <property type="match status" value="1"/>
</dbReference>
<dbReference type="InterPro" id="IPR005798">
    <property type="entry name" value="Cyt_b/b6_C"/>
</dbReference>
<dbReference type="InterPro" id="IPR036150">
    <property type="entry name" value="Cyt_b/b6_C_sf"/>
</dbReference>
<dbReference type="InterPro" id="IPR005797">
    <property type="entry name" value="Cyt_b/b6_N"/>
</dbReference>
<dbReference type="InterPro" id="IPR027387">
    <property type="entry name" value="Cytb/b6-like_sf"/>
</dbReference>
<dbReference type="InterPro" id="IPR030689">
    <property type="entry name" value="Cytochrome_b"/>
</dbReference>
<dbReference type="InterPro" id="IPR048260">
    <property type="entry name" value="Cytochrome_b_C_euk/bac"/>
</dbReference>
<dbReference type="InterPro" id="IPR048259">
    <property type="entry name" value="Cytochrome_b_N_euk/bac"/>
</dbReference>
<dbReference type="InterPro" id="IPR016174">
    <property type="entry name" value="Di-haem_cyt_TM"/>
</dbReference>
<dbReference type="PANTHER" id="PTHR19271">
    <property type="entry name" value="CYTOCHROME B"/>
    <property type="match status" value="1"/>
</dbReference>
<dbReference type="PANTHER" id="PTHR19271:SF16">
    <property type="entry name" value="CYTOCHROME B"/>
    <property type="match status" value="1"/>
</dbReference>
<dbReference type="Pfam" id="PF00032">
    <property type="entry name" value="Cytochrom_B_C"/>
    <property type="match status" value="1"/>
</dbReference>
<dbReference type="Pfam" id="PF00033">
    <property type="entry name" value="Cytochrome_B"/>
    <property type="match status" value="1"/>
</dbReference>
<dbReference type="PIRSF" id="PIRSF038885">
    <property type="entry name" value="COB"/>
    <property type="match status" value="1"/>
</dbReference>
<dbReference type="SUPFAM" id="SSF81648">
    <property type="entry name" value="a domain/subunit of cytochrome bc1 complex (Ubiquinol-cytochrome c reductase)"/>
    <property type="match status" value="1"/>
</dbReference>
<dbReference type="SUPFAM" id="SSF81342">
    <property type="entry name" value="Transmembrane di-heme cytochromes"/>
    <property type="match status" value="1"/>
</dbReference>
<dbReference type="PROSITE" id="PS51003">
    <property type="entry name" value="CYTB_CTER"/>
    <property type="match status" value="1"/>
</dbReference>
<dbReference type="PROSITE" id="PS51002">
    <property type="entry name" value="CYTB_NTER"/>
    <property type="match status" value="1"/>
</dbReference>
<comment type="function">
    <text evidence="2">Component of the ubiquinol-cytochrome c reductase complex (complex III or cytochrome b-c1 complex) that is part of the mitochondrial respiratory chain. The b-c1 complex mediates electron transfer from ubiquinol to cytochrome c. Contributes to the generation of a proton gradient across the mitochondrial membrane that is then used for ATP synthesis.</text>
</comment>
<comment type="cofactor">
    <cofactor evidence="2">
        <name>heme b</name>
        <dbReference type="ChEBI" id="CHEBI:60344"/>
    </cofactor>
    <text evidence="2">Binds 2 heme b groups non-covalently.</text>
</comment>
<comment type="subunit">
    <text evidence="2">The cytochrome bc1 complex contains 11 subunits: 3 respiratory subunits (MT-CYB, CYC1 and UQCRFS1), 2 core proteins (UQCRC1 and UQCRC2) and 6 low-molecular weight proteins (UQCRH/QCR6, UQCRB/QCR7, UQCRQ/QCR8, UQCR10/QCR9, UQCR11/QCR10 and a cleavage product of UQCRFS1). This cytochrome bc1 complex then forms a dimer.</text>
</comment>
<comment type="subcellular location">
    <subcellularLocation>
        <location evidence="2">Mitochondrion inner membrane</location>
        <topology evidence="2">Multi-pass membrane protein</topology>
    </subcellularLocation>
</comment>
<comment type="miscellaneous">
    <text evidence="1">Heme 1 (or BL or b562) is low-potential and absorbs at about 562 nm, and heme 2 (or BH or b566) is high-potential and absorbs at about 566 nm.</text>
</comment>
<comment type="similarity">
    <text evidence="3 4">Belongs to the cytochrome b family.</text>
</comment>
<comment type="caution">
    <text evidence="2">The full-length protein contains only eight transmembrane helices, not nine as predicted by bioinformatics tools.</text>
</comment>
<accession>Q9B5S0</accession>
<accession>Q9XP69</accession>
<sequence length="379" mass="42685">MTNIQKTHPLLKIVNNAFIDLPTPSNISSWWNFGSLLGICLILQILTGLFLAMHYTADTTTAFSSVTHICRDVNYGWIIRYMHANGASMFFICLFMHVGRGLYYGSYTYTETWNIGVILPFATMATAFMGYVLPWGQMSFWGATVITNLLSAIPYIGTNLVEWIWGGFSVDKATLTRFFAFHFIFPFIIAALAMVHLLFLHETGSNNPTGVSSDADKIPFHPYYTIKDILGALLLILALMILVLFSPDLLGDPDNYTPANPLNTPPHIKPEWYFLFAYAILRSIPNKLGGVLALVLSILILILMPLLHTSKQRSMMFRPISQCLFWILVADLLTLTWIGGQPVEHPYIIIGQLASIMYFLLILVLMPMASTIENNLLKW</sequence>